<comment type="function">
    <text evidence="2">A cytochrome P450 monooxygenase that catalyzes the side-chain hydroxylation and cleavage of cholesterol to pregnenolone, the precursor of most steroid hormones. Catalyzes three sequential oxidation reactions of cholesterol, namely the hydroxylation at C22 followed with the hydroxylation at C20 to yield 20R,22R-hydroxycholesterol that is further cleaved between C20 and C22 to yield the C21-steroid pregnenolone and 4-methylpentanal. Mechanistically, uses molecular oxygen inserting one oxygen atom into a substrate and reducing the second into a water molecule. Two electrons are provided by NADPH via a two-protein mitochondrial transfer system comprising flavoprotein FDXR (adrenodoxin/ferredoxin reductase) and nonheme iron-sulfur protein FDX1 or FDX2 (adrenodoxin/ferredoxin).</text>
</comment>
<comment type="catalytic activity">
    <reaction evidence="2">
        <text>6 reduced [adrenodoxin] + cholesterol + 3 O2 + 6 H(+) = 4-methylpentanal + pregnenolone + 6 oxidized [adrenodoxin] + 4 H2O</text>
        <dbReference type="Rhea" id="RHEA:35739"/>
        <dbReference type="Rhea" id="RHEA-COMP:9998"/>
        <dbReference type="Rhea" id="RHEA-COMP:9999"/>
        <dbReference type="ChEBI" id="CHEBI:15377"/>
        <dbReference type="ChEBI" id="CHEBI:15378"/>
        <dbReference type="ChEBI" id="CHEBI:15379"/>
        <dbReference type="ChEBI" id="CHEBI:16113"/>
        <dbReference type="ChEBI" id="CHEBI:16581"/>
        <dbReference type="ChEBI" id="CHEBI:17998"/>
        <dbReference type="ChEBI" id="CHEBI:33737"/>
        <dbReference type="ChEBI" id="CHEBI:33738"/>
        <dbReference type="EC" id="1.14.15.6"/>
    </reaction>
    <physiologicalReaction direction="left-to-right" evidence="2">
        <dbReference type="Rhea" id="RHEA:35740"/>
    </physiologicalReaction>
</comment>
<comment type="catalytic activity">
    <reaction evidence="2">
        <text>2 reduced [adrenodoxin] + cholesterol + O2 + 2 H(+) = (22R)-hydroxycholesterol + 2 oxidized [adrenodoxin] + H2O</text>
        <dbReference type="Rhea" id="RHEA:34335"/>
        <dbReference type="Rhea" id="RHEA-COMP:9998"/>
        <dbReference type="Rhea" id="RHEA-COMP:9999"/>
        <dbReference type="ChEBI" id="CHEBI:15377"/>
        <dbReference type="ChEBI" id="CHEBI:15378"/>
        <dbReference type="ChEBI" id="CHEBI:15379"/>
        <dbReference type="ChEBI" id="CHEBI:16113"/>
        <dbReference type="ChEBI" id="CHEBI:33737"/>
        <dbReference type="ChEBI" id="CHEBI:33738"/>
        <dbReference type="ChEBI" id="CHEBI:67237"/>
    </reaction>
    <physiologicalReaction direction="left-to-right" evidence="2">
        <dbReference type="Rhea" id="RHEA:34336"/>
    </physiologicalReaction>
</comment>
<comment type="catalytic activity">
    <reaction evidence="2">
        <text>(22R)-hydroxycholesterol + 2 reduced [adrenodoxin] + O2 + 2 H(+) = (20R,22R)-20,22-dihydroxycholesterol + 2 oxidized [adrenodoxin] + H2O</text>
        <dbReference type="Rhea" id="RHEA:34339"/>
        <dbReference type="Rhea" id="RHEA-COMP:9998"/>
        <dbReference type="Rhea" id="RHEA-COMP:9999"/>
        <dbReference type="ChEBI" id="CHEBI:1294"/>
        <dbReference type="ChEBI" id="CHEBI:15377"/>
        <dbReference type="ChEBI" id="CHEBI:15378"/>
        <dbReference type="ChEBI" id="CHEBI:15379"/>
        <dbReference type="ChEBI" id="CHEBI:33737"/>
        <dbReference type="ChEBI" id="CHEBI:33738"/>
        <dbReference type="ChEBI" id="CHEBI:67237"/>
    </reaction>
    <physiologicalReaction direction="left-to-right" evidence="2">
        <dbReference type="Rhea" id="RHEA:34340"/>
    </physiologicalReaction>
</comment>
<comment type="catalytic activity">
    <reaction evidence="2">
        <text>(20R,22R)-20,22-dihydroxycholesterol + 2 reduced [adrenodoxin] + O2 + 2 H(+) = 4-methylpentanal + pregnenolone + 2 oxidized [adrenodoxin] + 2 H2O</text>
        <dbReference type="Rhea" id="RHEA:34343"/>
        <dbReference type="Rhea" id="RHEA-COMP:9998"/>
        <dbReference type="Rhea" id="RHEA-COMP:9999"/>
        <dbReference type="ChEBI" id="CHEBI:1294"/>
        <dbReference type="ChEBI" id="CHEBI:15377"/>
        <dbReference type="ChEBI" id="CHEBI:15378"/>
        <dbReference type="ChEBI" id="CHEBI:15379"/>
        <dbReference type="ChEBI" id="CHEBI:16581"/>
        <dbReference type="ChEBI" id="CHEBI:17998"/>
        <dbReference type="ChEBI" id="CHEBI:33737"/>
        <dbReference type="ChEBI" id="CHEBI:33738"/>
    </reaction>
    <physiologicalReaction direction="left-to-right" evidence="2">
        <dbReference type="Rhea" id="RHEA:34344"/>
    </physiologicalReaction>
</comment>
<comment type="cofactor">
    <cofactor evidence="2">
        <name>heme</name>
        <dbReference type="ChEBI" id="CHEBI:30413"/>
    </cofactor>
</comment>
<comment type="pathway">
    <text evidence="2">Lipid metabolism; C21-steroid hormone metabolism.</text>
</comment>
<comment type="pathway">
    <text evidence="2">Steroid metabolism; cholesterol metabolism.</text>
</comment>
<comment type="subunit">
    <text evidence="2">Interacts with FDX1/adrenodoxin.</text>
</comment>
<comment type="subcellular location">
    <subcellularLocation>
        <location evidence="3 4 6">Mitochondrion inner membrane</location>
        <topology evidence="9">Peripheral membrane protein</topology>
    </subcellularLocation>
    <text evidence="6">Localizes to the matrix side of the mitochondrion inner membrane.</text>
</comment>
<comment type="tissue specificity">
    <text evidence="3 5 6">Expressed in the kidney where it localizes to the distal convoluted tubule and the thick ascending limb of the loop of Henle (at protein level) (PubMed:21075169). In the ovary, highly expressed in interstitial cells (at protein level) (PubMed:3948785). Also expressed in adrenal gland and testis (PubMed:3123325).</text>
</comment>
<comment type="induction">
    <text>Induced by FSH or pregnant mare's serum gonadotropin in ovaries of estrogen-treated immature rats in vivo.</text>
</comment>
<comment type="similarity">
    <text evidence="9">Belongs to the cytochrome P450 family.</text>
</comment>
<name>CP11A_RAT</name>
<feature type="transit peptide" description="Mitochondrion" evidence="1">
    <location>
        <begin position="1"/>
        <end position="36"/>
    </location>
</feature>
<feature type="chain" id="PRO_0000003590" description="Cholesterol side-chain cleavage enzyme, mitochondrial">
    <location>
        <begin position="37"/>
        <end position="526"/>
    </location>
</feature>
<feature type="binding site" description="axial binding residue" evidence="2">
    <location>
        <position position="459"/>
    </location>
    <ligand>
        <name>heme</name>
        <dbReference type="ChEBI" id="CHEBI:30413"/>
    </ligand>
    <ligandPart>
        <name>Fe</name>
        <dbReference type="ChEBI" id="CHEBI:18248"/>
    </ligandPart>
</feature>
<dbReference type="EC" id="1.14.15.6" evidence="2"/>
<dbReference type="EMBL" id="J05156">
    <property type="protein sequence ID" value="AAA40989.1"/>
    <property type="molecule type" value="mRNA"/>
</dbReference>
<dbReference type="EMBL" id="M63133">
    <property type="protein sequence ID" value="AAA40958.1"/>
    <property type="molecule type" value="Genomic_DNA"/>
</dbReference>
<dbReference type="EMBL" id="M63125">
    <property type="protein sequence ID" value="AAA40958.1"/>
    <property type="status" value="JOINED"/>
    <property type="molecule type" value="Genomic_DNA"/>
</dbReference>
<dbReference type="EMBL" id="M63126">
    <property type="protein sequence ID" value="AAA40958.1"/>
    <property type="status" value="JOINED"/>
    <property type="molecule type" value="Genomic_DNA"/>
</dbReference>
<dbReference type="EMBL" id="M63127">
    <property type="protein sequence ID" value="AAA40958.1"/>
    <property type="status" value="JOINED"/>
    <property type="molecule type" value="Genomic_DNA"/>
</dbReference>
<dbReference type="EMBL" id="M63128">
    <property type="protein sequence ID" value="AAA40958.1"/>
    <property type="status" value="JOINED"/>
    <property type="molecule type" value="Genomic_DNA"/>
</dbReference>
<dbReference type="EMBL" id="M63129">
    <property type="protein sequence ID" value="AAA40958.1"/>
    <property type="status" value="JOINED"/>
    <property type="molecule type" value="Genomic_DNA"/>
</dbReference>
<dbReference type="EMBL" id="M63130">
    <property type="protein sequence ID" value="AAA40958.1"/>
    <property type="status" value="JOINED"/>
    <property type="molecule type" value="Genomic_DNA"/>
</dbReference>
<dbReference type="EMBL" id="M63131">
    <property type="protein sequence ID" value="AAA40958.1"/>
    <property type="status" value="JOINED"/>
    <property type="molecule type" value="Genomic_DNA"/>
</dbReference>
<dbReference type="EMBL" id="M63132">
    <property type="protein sequence ID" value="AAA40958.1"/>
    <property type="status" value="JOINED"/>
    <property type="molecule type" value="Genomic_DNA"/>
</dbReference>
<dbReference type="EMBL" id="BC089100">
    <property type="protein sequence ID" value="AAH89100.1"/>
    <property type="molecule type" value="mRNA"/>
</dbReference>
<dbReference type="EMBL" id="M22615">
    <property type="protein sequence ID" value="AAA62267.1"/>
    <property type="molecule type" value="mRNA"/>
</dbReference>
<dbReference type="PIR" id="A34164">
    <property type="entry name" value="A34164"/>
</dbReference>
<dbReference type="RefSeq" id="NP_058982.1">
    <property type="nucleotide sequence ID" value="NM_017286.3"/>
</dbReference>
<dbReference type="SMR" id="P14137"/>
<dbReference type="FunCoup" id="P14137">
    <property type="interactions" value="26"/>
</dbReference>
<dbReference type="STRING" id="10116.ENSRNOP00000010831"/>
<dbReference type="BindingDB" id="P14137"/>
<dbReference type="ChEMBL" id="CHEMBL5246"/>
<dbReference type="DrugCentral" id="P14137"/>
<dbReference type="iPTMnet" id="P14137"/>
<dbReference type="PhosphoSitePlus" id="P14137"/>
<dbReference type="PaxDb" id="10116-ENSRNOP00000010831"/>
<dbReference type="GeneID" id="29680"/>
<dbReference type="KEGG" id="rno:29680"/>
<dbReference type="UCSC" id="RGD:69325">
    <property type="organism name" value="rat"/>
</dbReference>
<dbReference type="AGR" id="RGD:69325"/>
<dbReference type="CTD" id="1583"/>
<dbReference type="RGD" id="69325">
    <property type="gene designation" value="Cyp11a1"/>
</dbReference>
<dbReference type="eggNOG" id="KOG0159">
    <property type="taxonomic scope" value="Eukaryota"/>
</dbReference>
<dbReference type="HOGENOM" id="CLU_001570_28_4_1"/>
<dbReference type="InParanoid" id="P14137"/>
<dbReference type="OrthoDB" id="24955at9989"/>
<dbReference type="PhylomeDB" id="P14137"/>
<dbReference type="BRENDA" id="1.14.15.6">
    <property type="organism ID" value="5301"/>
</dbReference>
<dbReference type="Reactome" id="R-RNO-196108">
    <property type="pathway name" value="Pregnenolone biosynthesis"/>
</dbReference>
<dbReference type="Reactome" id="R-RNO-211976">
    <property type="pathway name" value="Endogenous sterols"/>
</dbReference>
<dbReference type="SABIO-RK" id="P14137"/>
<dbReference type="UniPathway" id="UPA00229"/>
<dbReference type="UniPathway" id="UPA00296"/>
<dbReference type="PRO" id="PR:P14137"/>
<dbReference type="Proteomes" id="UP000002494">
    <property type="component" value="Unplaced"/>
</dbReference>
<dbReference type="GO" id="GO:0030061">
    <property type="term" value="C:mitochondrial crista"/>
    <property type="evidence" value="ECO:0000314"/>
    <property type="project" value="RGD"/>
</dbReference>
<dbReference type="GO" id="GO:0005743">
    <property type="term" value="C:mitochondrial inner membrane"/>
    <property type="evidence" value="ECO:0000314"/>
    <property type="project" value="RGD"/>
</dbReference>
<dbReference type="GO" id="GO:0005739">
    <property type="term" value="C:mitochondrion"/>
    <property type="evidence" value="ECO:0000314"/>
    <property type="project" value="UniProtKB"/>
</dbReference>
<dbReference type="GO" id="GO:0043204">
    <property type="term" value="C:perikaryon"/>
    <property type="evidence" value="ECO:0000314"/>
    <property type="project" value="RGD"/>
</dbReference>
<dbReference type="GO" id="GO:0008386">
    <property type="term" value="F:cholesterol monooxygenase (side-chain-cleaving) activity"/>
    <property type="evidence" value="ECO:0000266"/>
    <property type="project" value="RGD"/>
</dbReference>
<dbReference type="GO" id="GO:0020037">
    <property type="term" value="F:heme binding"/>
    <property type="evidence" value="ECO:0000250"/>
    <property type="project" value="UniProtKB"/>
</dbReference>
<dbReference type="GO" id="GO:0005506">
    <property type="term" value="F:iron ion binding"/>
    <property type="evidence" value="ECO:0007669"/>
    <property type="project" value="InterPro"/>
</dbReference>
<dbReference type="GO" id="GO:0018879">
    <property type="term" value="P:biphenyl metabolic process"/>
    <property type="evidence" value="ECO:0000270"/>
    <property type="project" value="RGD"/>
</dbReference>
<dbReference type="GO" id="GO:0006700">
    <property type="term" value="P:C21-steroid hormone biosynthetic process"/>
    <property type="evidence" value="ECO:0000314"/>
    <property type="project" value="RGD"/>
</dbReference>
<dbReference type="GO" id="GO:0071236">
    <property type="term" value="P:cellular response to antibiotic"/>
    <property type="evidence" value="ECO:0000270"/>
    <property type="project" value="RGD"/>
</dbReference>
<dbReference type="GO" id="GO:0071276">
    <property type="term" value="P:cellular response to cadmium ion"/>
    <property type="evidence" value="ECO:0000270"/>
    <property type="project" value="RGD"/>
</dbReference>
<dbReference type="GO" id="GO:0071320">
    <property type="term" value="P:cellular response to cAMP"/>
    <property type="evidence" value="ECO:0000270"/>
    <property type="project" value="RGD"/>
</dbReference>
<dbReference type="GO" id="GO:0044344">
    <property type="term" value="P:cellular response to fibroblast growth factor stimulus"/>
    <property type="evidence" value="ECO:0000270"/>
    <property type="project" value="RGD"/>
</dbReference>
<dbReference type="GO" id="GO:0071372">
    <property type="term" value="P:cellular response to follicle-stimulating hormone stimulus"/>
    <property type="evidence" value="ECO:0000270"/>
    <property type="project" value="RGD"/>
</dbReference>
<dbReference type="GO" id="GO:0071371">
    <property type="term" value="P:cellular response to gonadotropin stimulus"/>
    <property type="evidence" value="ECO:0000270"/>
    <property type="project" value="RGD"/>
</dbReference>
<dbReference type="GO" id="GO:0071347">
    <property type="term" value="P:cellular response to interleukin-1"/>
    <property type="evidence" value="ECO:0000270"/>
    <property type="project" value="RGD"/>
</dbReference>
<dbReference type="GO" id="GO:0071222">
    <property type="term" value="P:cellular response to lipopolysaccharide"/>
    <property type="evidence" value="ECO:0000270"/>
    <property type="project" value="RGD"/>
</dbReference>
<dbReference type="GO" id="GO:0071375">
    <property type="term" value="P:cellular response to peptide hormone stimulus"/>
    <property type="evidence" value="ECO:0000270"/>
    <property type="project" value="RGD"/>
</dbReference>
<dbReference type="GO" id="GO:0071560">
    <property type="term" value="P:cellular response to transforming growth factor beta stimulus"/>
    <property type="evidence" value="ECO:0000270"/>
    <property type="project" value="RGD"/>
</dbReference>
<dbReference type="GO" id="GO:0071356">
    <property type="term" value="P:cellular response to tumor necrosis factor"/>
    <property type="evidence" value="ECO:0000270"/>
    <property type="project" value="RGD"/>
</dbReference>
<dbReference type="GO" id="GO:0021549">
    <property type="term" value="P:cerebellum development"/>
    <property type="evidence" value="ECO:0000270"/>
    <property type="project" value="RGD"/>
</dbReference>
<dbReference type="GO" id="GO:0008203">
    <property type="term" value="P:cholesterol metabolic process"/>
    <property type="evidence" value="ECO:0000250"/>
    <property type="project" value="UniProtKB"/>
</dbReference>
<dbReference type="GO" id="GO:0034650">
    <property type="term" value="P:cortisol metabolic process"/>
    <property type="evidence" value="ECO:0000318"/>
    <property type="project" value="GO_Central"/>
</dbReference>
<dbReference type="GO" id="GO:0018894">
    <property type="term" value="P:dibenzo-p-dioxin metabolic process"/>
    <property type="evidence" value="ECO:0000270"/>
    <property type="project" value="RGD"/>
</dbReference>
<dbReference type="GO" id="GO:0006704">
    <property type="term" value="P:glucocorticoid biosynthetic process"/>
    <property type="evidence" value="ECO:0000318"/>
    <property type="project" value="GO_Central"/>
</dbReference>
<dbReference type="GO" id="GO:0060014">
    <property type="term" value="P:granulosa cell differentiation"/>
    <property type="evidence" value="ECO:0000270"/>
    <property type="project" value="RGD"/>
</dbReference>
<dbReference type="GO" id="GO:0021766">
    <property type="term" value="P:hippocampus development"/>
    <property type="evidence" value="ECO:0000270"/>
    <property type="project" value="RGD"/>
</dbReference>
<dbReference type="GO" id="GO:0033327">
    <property type="term" value="P:Leydig cell differentiation"/>
    <property type="evidence" value="ECO:0000270"/>
    <property type="project" value="RGD"/>
</dbReference>
<dbReference type="GO" id="GO:0008584">
    <property type="term" value="P:male gonad development"/>
    <property type="evidence" value="ECO:0000270"/>
    <property type="project" value="RGD"/>
</dbReference>
<dbReference type="GO" id="GO:0060135">
    <property type="term" value="P:maternal process involved in female pregnancy"/>
    <property type="evidence" value="ECO:0000270"/>
    <property type="project" value="RGD"/>
</dbReference>
<dbReference type="GO" id="GO:0007617">
    <property type="term" value="P:mating behavior"/>
    <property type="evidence" value="ECO:0000315"/>
    <property type="project" value="RGD"/>
</dbReference>
<dbReference type="GO" id="GO:0006082">
    <property type="term" value="P:organic acid metabolic process"/>
    <property type="evidence" value="ECO:0000270"/>
    <property type="project" value="RGD"/>
</dbReference>
<dbReference type="GO" id="GO:0018958">
    <property type="term" value="P:phenol-containing compound metabolic process"/>
    <property type="evidence" value="ECO:0000270"/>
    <property type="project" value="RGD"/>
</dbReference>
<dbReference type="GO" id="GO:0043279">
    <property type="term" value="P:response to alkaloid"/>
    <property type="evidence" value="ECO:0000270"/>
    <property type="project" value="RGD"/>
</dbReference>
<dbReference type="GO" id="GO:0043200">
    <property type="term" value="P:response to amino acid"/>
    <property type="evidence" value="ECO:0000270"/>
    <property type="project" value="RGD"/>
</dbReference>
<dbReference type="GO" id="GO:0046686">
    <property type="term" value="P:response to cadmium ion"/>
    <property type="evidence" value="ECO:0000270"/>
    <property type="project" value="RGD"/>
</dbReference>
<dbReference type="GO" id="GO:0051591">
    <property type="term" value="P:response to cAMP"/>
    <property type="evidence" value="ECO:0000270"/>
    <property type="project" value="RGD"/>
</dbReference>
<dbReference type="GO" id="GO:0051412">
    <property type="term" value="P:response to corticosterone"/>
    <property type="evidence" value="ECO:0000270"/>
    <property type="project" value="RGD"/>
</dbReference>
<dbReference type="GO" id="GO:0043627">
    <property type="term" value="P:response to estrogen"/>
    <property type="evidence" value="ECO:0000270"/>
    <property type="project" value="RGD"/>
</dbReference>
<dbReference type="GO" id="GO:0060992">
    <property type="term" value="P:response to fungicide"/>
    <property type="evidence" value="ECO:0000270"/>
    <property type="project" value="RGD"/>
</dbReference>
<dbReference type="GO" id="GO:0010332">
    <property type="term" value="P:response to gamma radiation"/>
    <property type="evidence" value="ECO:0000270"/>
    <property type="project" value="RGD"/>
</dbReference>
<dbReference type="GO" id="GO:0033595">
    <property type="term" value="P:response to genistein"/>
    <property type="evidence" value="ECO:0000270"/>
    <property type="project" value="RGD"/>
</dbReference>
<dbReference type="GO" id="GO:0034698">
    <property type="term" value="P:response to gonadotropin"/>
    <property type="evidence" value="ECO:0000270"/>
    <property type="project" value="RGD"/>
</dbReference>
<dbReference type="GO" id="GO:0042542">
    <property type="term" value="P:response to hydrogen peroxide"/>
    <property type="evidence" value="ECO:0000315"/>
    <property type="project" value="RGD"/>
</dbReference>
<dbReference type="GO" id="GO:0017085">
    <property type="term" value="P:response to insecticide"/>
    <property type="evidence" value="ECO:0000270"/>
    <property type="project" value="RGD"/>
</dbReference>
<dbReference type="GO" id="GO:0010212">
    <property type="term" value="P:response to ionizing radiation"/>
    <property type="evidence" value="ECO:0000270"/>
    <property type="project" value="RGD"/>
</dbReference>
<dbReference type="GO" id="GO:0033591">
    <property type="term" value="P:response to L-ascorbic acid"/>
    <property type="evidence" value="ECO:0000270"/>
    <property type="project" value="RGD"/>
</dbReference>
<dbReference type="GO" id="GO:0007584">
    <property type="term" value="P:response to nutrient"/>
    <property type="evidence" value="ECO:0000270"/>
    <property type="project" value="RGD"/>
</dbReference>
<dbReference type="GO" id="GO:0043434">
    <property type="term" value="P:response to peptide hormone"/>
    <property type="evidence" value="ECO:0000270"/>
    <property type="project" value="RGD"/>
</dbReference>
<dbReference type="GO" id="GO:0009651">
    <property type="term" value="P:response to salt stress"/>
    <property type="evidence" value="ECO:0000270"/>
    <property type="project" value="RGD"/>
</dbReference>
<dbReference type="GO" id="GO:0048545">
    <property type="term" value="P:response to steroid hormone"/>
    <property type="evidence" value="ECO:0000270"/>
    <property type="project" value="RGD"/>
</dbReference>
<dbReference type="GO" id="GO:0033197">
    <property type="term" value="P:response to vitamin E"/>
    <property type="evidence" value="ECO:0000270"/>
    <property type="project" value="RGD"/>
</dbReference>
<dbReference type="GO" id="GO:0009410">
    <property type="term" value="P:response to xenobiotic stimulus"/>
    <property type="evidence" value="ECO:0000270"/>
    <property type="project" value="RGD"/>
</dbReference>
<dbReference type="GO" id="GO:0014037">
    <property type="term" value="P:Schwann cell differentiation"/>
    <property type="evidence" value="ECO:0000270"/>
    <property type="project" value="RGD"/>
</dbReference>
<dbReference type="GO" id="GO:0006694">
    <property type="term" value="P:steroid biosynthetic process"/>
    <property type="evidence" value="ECO:0000315"/>
    <property type="project" value="RGD"/>
</dbReference>
<dbReference type="GO" id="GO:0061370">
    <property type="term" value="P:testosterone biosynthetic process"/>
    <property type="evidence" value="ECO:0000270"/>
    <property type="project" value="RGD"/>
</dbReference>
<dbReference type="FunFam" id="1.10.630.10:FF:000015">
    <property type="entry name" value="Cholesterol side-chain cleavage enzyme, mitochondrial"/>
    <property type="match status" value="1"/>
</dbReference>
<dbReference type="Gene3D" id="1.10.630.10">
    <property type="entry name" value="Cytochrome P450"/>
    <property type="match status" value="1"/>
</dbReference>
<dbReference type="InterPro" id="IPR050479">
    <property type="entry name" value="CYP11_CYP27_families"/>
</dbReference>
<dbReference type="InterPro" id="IPR001128">
    <property type="entry name" value="Cyt_P450"/>
</dbReference>
<dbReference type="InterPro" id="IPR017972">
    <property type="entry name" value="Cyt_P450_CS"/>
</dbReference>
<dbReference type="InterPro" id="IPR002401">
    <property type="entry name" value="Cyt_P450_E_grp-I"/>
</dbReference>
<dbReference type="InterPro" id="IPR036396">
    <property type="entry name" value="Cyt_P450_sf"/>
</dbReference>
<dbReference type="PANTHER" id="PTHR24279:SF3">
    <property type="entry name" value="CHOLESTEROL SIDE-CHAIN CLEAVAGE ENZYME, MITOCHONDRIAL"/>
    <property type="match status" value="1"/>
</dbReference>
<dbReference type="PANTHER" id="PTHR24279">
    <property type="entry name" value="CYTOCHROME P450"/>
    <property type="match status" value="1"/>
</dbReference>
<dbReference type="Pfam" id="PF00067">
    <property type="entry name" value="p450"/>
    <property type="match status" value="1"/>
</dbReference>
<dbReference type="PRINTS" id="PR00463">
    <property type="entry name" value="EP450I"/>
</dbReference>
<dbReference type="PRINTS" id="PR00385">
    <property type="entry name" value="P450"/>
</dbReference>
<dbReference type="SUPFAM" id="SSF48264">
    <property type="entry name" value="Cytochrome P450"/>
    <property type="match status" value="1"/>
</dbReference>
<dbReference type="PROSITE" id="PS00086">
    <property type="entry name" value="CYTOCHROME_P450"/>
    <property type="match status" value="1"/>
</dbReference>
<keyword id="KW-0153">Cholesterol metabolism</keyword>
<keyword id="KW-0349">Heme</keyword>
<keyword id="KW-0408">Iron</keyword>
<keyword id="KW-0443">Lipid metabolism</keyword>
<keyword id="KW-0472">Membrane</keyword>
<keyword id="KW-0479">Metal-binding</keyword>
<keyword id="KW-0496">Mitochondrion</keyword>
<keyword id="KW-0999">Mitochondrion inner membrane</keyword>
<keyword id="KW-0503">Monooxygenase</keyword>
<keyword id="KW-0560">Oxidoreductase</keyword>
<keyword id="KW-1185">Reference proteome</keyword>
<keyword id="KW-0753">Steroid metabolism</keyword>
<keyword id="KW-0755">Steroidogenesis</keyword>
<keyword id="KW-1207">Sterol metabolism</keyword>
<keyword id="KW-0809">Transit peptide</keyword>
<organism>
    <name type="scientific">Rattus norvegicus</name>
    <name type="common">Rat</name>
    <dbReference type="NCBI Taxonomy" id="10116"/>
    <lineage>
        <taxon>Eukaryota</taxon>
        <taxon>Metazoa</taxon>
        <taxon>Chordata</taxon>
        <taxon>Craniata</taxon>
        <taxon>Vertebrata</taxon>
        <taxon>Euteleostomi</taxon>
        <taxon>Mammalia</taxon>
        <taxon>Eutheria</taxon>
        <taxon>Euarchontoglires</taxon>
        <taxon>Glires</taxon>
        <taxon>Rodentia</taxon>
        <taxon>Myomorpha</taxon>
        <taxon>Muroidea</taxon>
        <taxon>Muridae</taxon>
        <taxon>Murinae</taxon>
        <taxon>Rattus</taxon>
    </lineage>
</organism>
<accession>P14137</accession>
<accession>Q5FWY8</accession>
<accession>Q6LDR9</accession>
<protein>
    <recommendedName>
        <fullName evidence="8">Cholesterol side-chain cleavage enzyme, mitochondrial</fullName>
        <ecNumber evidence="2">1.14.15.6</ecNumber>
    </recommendedName>
    <alternativeName>
        <fullName>CYPXIA1</fullName>
    </alternativeName>
    <alternativeName>
        <fullName>Cholesterol desmolase</fullName>
    </alternativeName>
    <alternativeName>
        <fullName>Cytochrome P450 11A1</fullName>
    </alternativeName>
    <alternativeName>
        <fullName>Cytochrome P450(scc)</fullName>
    </alternativeName>
</protein>
<gene>
    <name evidence="7" type="primary">Cyp11a1</name>
    <name type="synonym">Cyp11a</name>
    <name type="synonym">Cyp11a-1</name>
</gene>
<reference key="1">
    <citation type="journal article" date="1989" name="J. Biol. Chem.">
        <title>Cyclic AMP-dependent and -independent regulation of cholesterol side chain cleavage cytochrome P-450 (P-450scc) in rat ovarian granulosa cells and corpora lutea. cDNA and deduced amino acid sequence of rat P-450scc.</title>
        <authorList>
            <person name="Oonk R.B."/>
            <person name="Krasnow J.S."/>
            <person name="Beattie W.G."/>
            <person name="Richards J.S."/>
        </authorList>
    </citation>
    <scope>NUCLEOTIDE SEQUENCE [MRNA]</scope>
</reference>
<reference key="2">
    <citation type="journal article" date="1990" name="J. Biol. Chem.">
        <title>Rat cholesterol side-chain cleavage cytochrome P-450 (P-450scc) gene. Structure and regulation by cAMP in vitro.</title>
        <authorList>
            <person name="Oonk R.B."/>
            <person name="Parker K.L."/>
            <person name="Gibson J.L."/>
            <person name="Richards J.S."/>
        </authorList>
    </citation>
    <scope>NUCLEOTIDE SEQUENCE [GENOMIC DNA]</scope>
</reference>
<reference key="3">
    <citation type="journal article" date="2004" name="Genome Res.">
        <title>The status, quality, and expansion of the NIH full-length cDNA project: the Mammalian Gene Collection (MGC).</title>
        <authorList>
            <consortium name="The MGC Project Team"/>
        </authorList>
    </citation>
    <scope>NUCLEOTIDE SEQUENCE [LARGE SCALE MRNA]</scope>
    <source>
        <tissue>Ovary</tissue>
    </source>
</reference>
<reference key="4">
    <citation type="journal article" date="1987" name="Gene">
        <title>Rat cholesterol side-chain cleavage enzyme (P-450scc): use of a cDNA probe to study the hormonal regulation of P-450scc mRNA levels in ovarian granulosa cells.</title>
        <authorList>
            <person name="McMasters K.M."/>
            <person name="Dickson L.A."/>
            <person name="Shamy R.V."/>
            <person name="Robischon K."/>
            <person name="Macdonald G.J."/>
            <person name="Moyle W.R."/>
        </authorList>
    </citation>
    <scope>NUCLEOTIDE SEQUENCE [MRNA] OF 344-526</scope>
    <scope>TISSUE SPECIFICITY</scope>
    <source>
        <strain>Sprague-Dawley</strain>
        <tissue>Ovary</tissue>
    </source>
</reference>
<reference key="5">
    <citation type="journal article" date="1986" name="Endocrinology">
        <title>Preparation of antiserum to rat cytochrome P-450 cholesterol side chain cleavage, and its use for ultrastructural localization of the immunoreactive enzyme by protein A-gold technique.</title>
        <authorList>
            <person name="Farkash Y."/>
            <person name="Timberg R."/>
            <person name="Orly J."/>
        </authorList>
    </citation>
    <scope>SUBCELLULAR LOCATION</scope>
    <scope>TISSUE SPECIFICITY</scope>
</reference>
<reference key="6">
    <citation type="journal article" date="1990" name="J. Cell Biol.">
        <title>Induction and mitochondrial localization of cytochrome P450scc system enzymes in normal and transformed ovarian granulosa cells.</title>
        <authorList>
            <person name="Hanukoglu I."/>
            <person name="Suh B.S."/>
            <person name="Himmelhoch S."/>
            <person name="Amsterdam A."/>
        </authorList>
    </citation>
    <scope>SUBCELLULAR LOCATION</scope>
</reference>
<reference key="7">
    <citation type="journal article" date="2011" name="Mol. Cell. Endocrinol.">
        <title>Localization and functional activity of cytochrome P450 side chain cleavage enzyme (CYP11A1) in the adult rat kidney.</title>
        <authorList>
            <person name="Pagotto M.A."/>
            <person name="Roldan M.L."/>
            <person name="Pagotto R.M."/>
            <person name="Lugano M.C."/>
            <person name="Pisani G.B."/>
            <person name="Rogic G."/>
            <person name="Molinas S.M."/>
            <person name="Trumper L."/>
            <person name="Pignataro O.P."/>
            <person name="Monasterolo L.A."/>
        </authorList>
    </citation>
    <scope>SUBCELLULAR LOCATION</scope>
    <scope>TISSUE SPECIFICITY</scope>
</reference>
<proteinExistence type="evidence at protein level"/>
<evidence type="ECO:0000250" key="1">
    <source>
        <dbReference type="UniProtKB" id="P00189"/>
    </source>
</evidence>
<evidence type="ECO:0000250" key="2">
    <source>
        <dbReference type="UniProtKB" id="P05108"/>
    </source>
</evidence>
<evidence type="ECO:0000269" key="3">
    <source>
    </source>
</evidence>
<evidence type="ECO:0000269" key="4">
    <source>
    </source>
</evidence>
<evidence type="ECO:0000269" key="5">
    <source>
    </source>
</evidence>
<evidence type="ECO:0000269" key="6">
    <source>
    </source>
</evidence>
<evidence type="ECO:0000303" key="7">
    <source>
    </source>
</evidence>
<evidence type="ECO:0000303" key="8">
    <source>
    </source>
</evidence>
<evidence type="ECO:0000305" key="9"/>
<sequence length="526" mass="60586">MLAKGLCLRSVLVKSCQPFLSPVWQGPGLATGNGAGISSTNSPRSFNEIPSPGDNGWINLYHFLRENGTHRIHYHHMQNFQKYGPIYREKLGNMESVYILDPKDAATLFSCEGPNPERYLVPPWVAYHQYYQRPIGVLFKSSDAWRKDRIVLNQEVMAPDSIKNFVPLLEGVAQDFIKVLHRRIKQQNSGKFSGDISDDLFRFAFESITSVVFGERLGMLEEIVDPESQRFIDAVYQMFHTSVPMLNMPPDLFRLFRTKTWKDHAAAWDVIFSKADEYTQNFYWDLRQKRDFSKYPGVLYSLLGGNKLPFKNIQANITEMLAGGVDTTSMTLQWNLYEMAHNLKVQEMLRAEVLAARRQAQGDMAKMVQLVPLLKASIKETLRLHPISVTLQRYIVNDLVLRNYKIPAKTLVQVASYAMGRESSFFPNPNKFDPTRWLEKSQNTTHFRYLGFGWGVRQCLGRRIAELEMTIFLINVLENFRIEVQSIRDVGTKFNLILMPEKPIFFNFQPLKQDLGSTMPRKGDTV</sequence>